<protein>
    <recommendedName>
        <fullName evidence="1">Small ribosomal subunit protein bS6</fullName>
    </recommendedName>
    <alternativeName>
        <fullName evidence="2">30S ribosomal protein S6</fullName>
    </alternativeName>
</protein>
<dbReference type="EMBL" id="CP000705">
    <property type="protein sequence ID" value="ABQ82283.1"/>
    <property type="molecule type" value="Genomic_DNA"/>
</dbReference>
<dbReference type="RefSeq" id="WP_003665235.1">
    <property type="nucleotide sequence ID" value="NZ_AZDD01000016.1"/>
</dbReference>
<dbReference type="SMR" id="A5VHF9"/>
<dbReference type="STRING" id="557436.Lreu_0007"/>
<dbReference type="GeneID" id="77191350"/>
<dbReference type="KEGG" id="lre:Lreu_0007"/>
<dbReference type="PATRIC" id="fig|557436.17.peg.516"/>
<dbReference type="eggNOG" id="COG0360">
    <property type="taxonomic scope" value="Bacteria"/>
</dbReference>
<dbReference type="HOGENOM" id="CLU_113441_5_3_9"/>
<dbReference type="Proteomes" id="UP000001991">
    <property type="component" value="Chromosome"/>
</dbReference>
<dbReference type="GO" id="GO:0005737">
    <property type="term" value="C:cytoplasm"/>
    <property type="evidence" value="ECO:0007669"/>
    <property type="project" value="UniProtKB-ARBA"/>
</dbReference>
<dbReference type="GO" id="GO:1990904">
    <property type="term" value="C:ribonucleoprotein complex"/>
    <property type="evidence" value="ECO:0007669"/>
    <property type="project" value="UniProtKB-KW"/>
</dbReference>
<dbReference type="GO" id="GO:0005840">
    <property type="term" value="C:ribosome"/>
    <property type="evidence" value="ECO:0007669"/>
    <property type="project" value="UniProtKB-KW"/>
</dbReference>
<dbReference type="GO" id="GO:0070181">
    <property type="term" value="F:small ribosomal subunit rRNA binding"/>
    <property type="evidence" value="ECO:0007669"/>
    <property type="project" value="TreeGrafter"/>
</dbReference>
<dbReference type="GO" id="GO:0003735">
    <property type="term" value="F:structural constituent of ribosome"/>
    <property type="evidence" value="ECO:0007669"/>
    <property type="project" value="InterPro"/>
</dbReference>
<dbReference type="GO" id="GO:0006412">
    <property type="term" value="P:translation"/>
    <property type="evidence" value="ECO:0007669"/>
    <property type="project" value="UniProtKB-UniRule"/>
</dbReference>
<dbReference type="CDD" id="cd00473">
    <property type="entry name" value="bS6"/>
    <property type="match status" value="1"/>
</dbReference>
<dbReference type="FunFam" id="3.30.70.60:FF:000002">
    <property type="entry name" value="30S ribosomal protein S6"/>
    <property type="match status" value="1"/>
</dbReference>
<dbReference type="Gene3D" id="3.30.70.60">
    <property type="match status" value="1"/>
</dbReference>
<dbReference type="HAMAP" id="MF_00360">
    <property type="entry name" value="Ribosomal_bS6"/>
    <property type="match status" value="1"/>
</dbReference>
<dbReference type="InterPro" id="IPR000529">
    <property type="entry name" value="Ribosomal_bS6"/>
</dbReference>
<dbReference type="InterPro" id="IPR035980">
    <property type="entry name" value="Ribosomal_bS6_sf"/>
</dbReference>
<dbReference type="InterPro" id="IPR020814">
    <property type="entry name" value="Ribosomal_S6_plastid/chlpt"/>
</dbReference>
<dbReference type="InterPro" id="IPR014717">
    <property type="entry name" value="Transl_elong_EF1B/ribsomal_bS6"/>
</dbReference>
<dbReference type="NCBIfam" id="TIGR00166">
    <property type="entry name" value="S6"/>
    <property type="match status" value="1"/>
</dbReference>
<dbReference type="PANTHER" id="PTHR21011">
    <property type="entry name" value="MITOCHONDRIAL 28S RIBOSOMAL PROTEIN S6"/>
    <property type="match status" value="1"/>
</dbReference>
<dbReference type="PANTHER" id="PTHR21011:SF1">
    <property type="entry name" value="SMALL RIBOSOMAL SUBUNIT PROTEIN BS6M"/>
    <property type="match status" value="1"/>
</dbReference>
<dbReference type="Pfam" id="PF01250">
    <property type="entry name" value="Ribosomal_S6"/>
    <property type="match status" value="1"/>
</dbReference>
<dbReference type="SUPFAM" id="SSF54995">
    <property type="entry name" value="Ribosomal protein S6"/>
    <property type="match status" value="1"/>
</dbReference>
<gene>
    <name evidence="1" type="primary">rpsF</name>
    <name type="ordered locus">Lreu_0007</name>
</gene>
<evidence type="ECO:0000255" key="1">
    <source>
        <dbReference type="HAMAP-Rule" id="MF_00360"/>
    </source>
</evidence>
<evidence type="ECO:0000305" key="2"/>
<feature type="chain" id="PRO_1000079452" description="Small ribosomal subunit protein bS6">
    <location>
        <begin position="1"/>
        <end position="98"/>
    </location>
</feature>
<comment type="function">
    <text evidence="1">Binds together with bS18 to 16S ribosomal RNA.</text>
</comment>
<comment type="similarity">
    <text evidence="1">Belongs to the bacterial ribosomal protein bS6 family.</text>
</comment>
<proteinExistence type="inferred from homology"/>
<name>RS6_LIMRD</name>
<reference key="1">
    <citation type="journal article" date="2011" name="PLoS Genet.">
        <title>The evolution of host specialization in the vertebrate gut symbiont Lactobacillus reuteri.</title>
        <authorList>
            <person name="Frese S.A."/>
            <person name="Benson A.K."/>
            <person name="Tannock G.W."/>
            <person name="Loach D.M."/>
            <person name="Kim J."/>
            <person name="Zhang M."/>
            <person name="Oh P.L."/>
            <person name="Heng N.C."/>
            <person name="Patil P.B."/>
            <person name="Juge N."/>
            <person name="Mackenzie D.A."/>
            <person name="Pearson B.M."/>
            <person name="Lapidus A."/>
            <person name="Dalin E."/>
            <person name="Tice H."/>
            <person name="Goltsman E."/>
            <person name="Land M."/>
            <person name="Hauser L."/>
            <person name="Ivanova N."/>
            <person name="Kyrpides N.C."/>
            <person name="Walter J."/>
        </authorList>
    </citation>
    <scope>NUCLEOTIDE SEQUENCE [LARGE SCALE GENOMIC DNA]</scope>
    <source>
        <strain>DSM 20016</strain>
    </source>
</reference>
<organism>
    <name type="scientific">Limosilactobacillus reuteri (strain DSM 20016)</name>
    <name type="common">Lactobacillus reuteri</name>
    <dbReference type="NCBI Taxonomy" id="557436"/>
    <lineage>
        <taxon>Bacteria</taxon>
        <taxon>Bacillati</taxon>
        <taxon>Bacillota</taxon>
        <taxon>Bacilli</taxon>
        <taxon>Lactobacillales</taxon>
        <taxon>Lactobacillaceae</taxon>
        <taxon>Limosilactobacillus</taxon>
    </lineage>
</organism>
<keyword id="KW-1185">Reference proteome</keyword>
<keyword id="KW-0687">Ribonucleoprotein</keyword>
<keyword id="KW-0689">Ribosomal protein</keyword>
<keyword id="KW-0694">RNA-binding</keyword>
<keyword id="KW-0699">rRNA-binding</keyword>
<accession>A5VHF9</accession>
<sequence>METRKYEITYIIRPDIEESAKSELVDRFDKILADNGATIADSKDWSTRRFAYPIAKYTEGTYHVVNLTTDSDQALNEFDRLAKFSDDILRHMIVKLDA</sequence>